<keyword id="KW-0030">Aminoacyl-tRNA synthetase</keyword>
<keyword id="KW-0067">ATP-binding</keyword>
<keyword id="KW-0963">Cytoplasm</keyword>
<keyword id="KW-0436">Ligase</keyword>
<keyword id="KW-0460">Magnesium</keyword>
<keyword id="KW-0479">Metal-binding</keyword>
<keyword id="KW-0547">Nucleotide-binding</keyword>
<keyword id="KW-0648">Protein biosynthesis</keyword>
<keyword id="KW-1185">Reference proteome</keyword>
<protein>
    <recommendedName>
        <fullName evidence="1">Phenylalanine--tRNA ligase alpha subunit</fullName>
        <ecNumber evidence="1">6.1.1.20</ecNumber>
    </recommendedName>
    <alternativeName>
        <fullName evidence="1">Phenylalanyl-tRNA synthetase alpha subunit</fullName>
        <shortName evidence="1">PheRS</shortName>
    </alternativeName>
</protein>
<accession>Q2GHR3</accession>
<proteinExistence type="inferred from homology"/>
<feature type="chain" id="PRO_1000006826" description="Phenylalanine--tRNA ligase alpha subunit">
    <location>
        <begin position="1"/>
        <end position="346"/>
    </location>
</feature>
<feature type="binding site" evidence="1">
    <location>
        <position position="262"/>
    </location>
    <ligand>
        <name>Mg(2+)</name>
        <dbReference type="ChEBI" id="CHEBI:18420"/>
        <note>shared with beta subunit</note>
    </ligand>
</feature>
<gene>
    <name evidence="1" type="primary">pheS</name>
    <name type="ordered locus">ECH_0196</name>
</gene>
<dbReference type="EC" id="6.1.1.20" evidence="1"/>
<dbReference type="EMBL" id="CP000236">
    <property type="protein sequence ID" value="ABD44710.1"/>
    <property type="molecule type" value="Genomic_DNA"/>
</dbReference>
<dbReference type="RefSeq" id="WP_006010465.1">
    <property type="nucleotide sequence ID" value="NC_007799.1"/>
</dbReference>
<dbReference type="SMR" id="Q2GHR3"/>
<dbReference type="STRING" id="205920.ECH_0196"/>
<dbReference type="KEGG" id="ech:ECH_0196"/>
<dbReference type="eggNOG" id="COG0016">
    <property type="taxonomic scope" value="Bacteria"/>
</dbReference>
<dbReference type="HOGENOM" id="CLU_025086_0_1_5"/>
<dbReference type="OrthoDB" id="9800719at2"/>
<dbReference type="Proteomes" id="UP000008320">
    <property type="component" value="Chromosome"/>
</dbReference>
<dbReference type="GO" id="GO:0005737">
    <property type="term" value="C:cytoplasm"/>
    <property type="evidence" value="ECO:0007669"/>
    <property type="project" value="UniProtKB-SubCell"/>
</dbReference>
<dbReference type="GO" id="GO:0005524">
    <property type="term" value="F:ATP binding"/>
    <property type="evidence" value="ECO:0007669"/>
    <property type="project" value="UniProtKB-UniRule"/>
</dbReference>
<dbReference type="GO" id="GO:0000287">
    <property type="term" value="F:magnesium ion binding"/>
    <property type="evidence" value="ECO:0007669"/>
    <property type="project" value="UniProtKB-UniRule"/>
</dbReference>
<dbReference type="GO" id="GO:0004826">
    <property type="term" value="F:phenylalanine-tRNA ligase activity"/>
    <property type="evidence" value="ECO:0007669"/>
    <property type="project" value="UniProtKB-UniRule"/>
</dbReference>
<dbReference type="GO" id="GO:0000049">
    <property type="term" value="F:tRNA binding"/>
    <property type="evidence" value="ECO:0007669"/>
    <property type="project" value="InterPro"/>
</dbReference>
<dbReference type="GO" id="GO:0006432">
    <property type="term" value="P:phenylalanyl-tRNA aminoacylation"/>
    <property type="evidence" value="ECO:0007669"/>
    <property type="project" value="UniProtKB-UniRule"/>
</dbReference>
<dbReference type="CDD" id="cd00496">
    <property type="entry name" value="PheRS_alpha_core"/>
    <property type="match status" value="1"/>
</dbReference>
<dbReference type="Gene3D" id="3.30.930.10">
    <property type="entry name" value="Bira Bifunctional Protein, Domain 2"/>
    <property type="match status" value="1"/>
</dbReference>
<dbReference type="HAMAP" id="MF_00281">
    <property type="entry name" value="Phe_tRNA_synth_alpha1"/>
    <property type="match status" value="1"/>
</dbReference>
<dbReference type="InterPro" id="IPR006195">
    <property type="entry name" value="aa-tRNA-synth_II"/>
</dbReference>
<dbReference type="InterPro" id="IPR045864">
    <property type="entry name" value="aa-tRNA-synth_II/BPL/LPL"/>
</dbReference>
<dbReference type="InterPro" id="IPR004529">
    <property type="entry name" value="Phe-tRNA-synth_IIc_asu"/>
</dbReference>
<dbReference type="InterPro" id="IPR004188">
    <property type="entry name" value="Phe-tRNA_ligase_II_N"/>
</dbReference>
<dbReference type="InterPro" id="IPR022911">
    <property type="entry name" value="Phe_tRNA_ligase_alpha1_bac"/>
</dbReference>
<dbReference type="InterPro" id="IPR002319">
    <property type="entry name" value="Phenylalanyl-tRNA_Synthase"/>
</dbReference>
<dbReference type="InterPro" id="IPR010978">
    <property type="entry name" value="tRNA-bd_arm"/>
</dbReference>
<dbReference type="NCBIfam" id="TIGR00468">
    <property type="entry name" value="pheS"/>
    <property type="match status" value="1"/>
</dbReference>
<dbReference type="PANTHER" id="PTHR11538:SF41">
    <property type="entry name" value="PHENYLALANINE--TRNA LIGASE, MITOCHONDRIAL"/>
    <property type="match status" value="1"/>
</dbReference>
<dbReference type="PANTHER" id="PTHR11538">
    <property type="entry name" value="PHENYLALANYL-TRNA SYNTHETASE"/>
    <property type="match status" value="1"/>
</dbReference>
<dbReference type="Pfam" id="PF02912">
    <property type="entry name" value="Phe_tRNA-synt_N"/>
    <property type="match status" value="1"/>
</dbReference>
<dbReference type="Pfam" id="PF01409">
    <property type="entry name" value="tRNA-synt_2d"/>
    <property type="match status" value="1"/>
</dbReference>
<dbReference type="SUPFAM" id="SSF55681">
    <property type="entry name" value="Class II aaRS and biotin synthetases"/>
    <property type="match status" value="1"/>
</dbReference>
<dbReference type="SUPFAM" id="SSF46589">
    <property type="entry name" value="tRNA-binding arm"/>
    <property type="match status" value="1"/>
</dbReference>
<dbReference type="PROSITE" id="PS50862">
    <property type="entry name" value="AA_TRNA_LIGASE_II"/>
    <property type="match status" value="1"/>
</dbReference>
<evidence type="ECO:0000255" key="1">
    <source>
        <dbReference type="HAMAP-Rule" id="MF_00281"/>
    </source>
</evidence>
<comment type="catalytic activity">
    <reaction evidence="1">
        <text>tRNA(Phe) + L-phenylalanine + ATP = L-phenylalanyl-tRNA(Phe) + AMP + diphosphate + H(+)</text>
        <dbReference type="Rhea" id="RHEA:19413"/>
        <dbReference type="Rhea" id="RHEA-COMP:9668"/>
        <dbReference type="Rhea" id="RHEA-COMP:9699"/>
        <dbReference type="ChEBI" id="CHEBI:15378"/>
        <dbReference type="ChEBI" id="CHEBI:30616"/>
        <dbReference type="ChEBI" id="CHEBI:33019"/>
        <dbReference type="ChEBI" id="CHEBI:58095"/>
        <dbReference type="ChEBI" id="CHEBI:78442"/>
        <dbReference type="ChEBI" id="CHEBI:78531"/>
        <dbReference type="ChEBI" id="CHEBI:456215"/>
        <dbReference type="EC" id="6.1.1.20"/>
    </reaction>
</comment>
<comment type="cofactor">
    <cofactor evidence="1">
        <name>Mg(2+)</name>
        <dbReference type="ChEBI" id="CHEBI:18420"/>
    </cofactor>
    <text evidence="1">Binds 2 magnesium ions per tetramer.</text>
</comment>
<comment type="subunit">
    <text evidence="1">Tetramer of two alpha and two beta subunits.</text>
</comment>
<comment type="subcellular location">
    <subcellularLocation>
        <location evidence="1">Cytoplasm</location>
    </subcellularLocation>
</comment>
<comment type="similarity">
    <text evidence="1">Belongs to the class-II aminoacyl-tRNA synthetase family. Phe-tRNA synthetase alpha subunit type 1 subfamily.</text>
</comment>
<name>SYFA_EHRCR</name>
<organism>
    <name type="scientific">Ehrlichia chaffeensis (strain ATCC CRL-10679 / Arkansas)</name>
    <dbReference type="NCBI Taxonomy" id="205920"/>
    <lineage>
        <taxon>Bacteria</taxon>
        <taxon>Pseudomonadati</taxon>
        <taxon>Pseudomonadota</taxon>
        <taxon>Alphaproteobacteria</taxon>
        <taxon>Rickettsiales</taxon>
        <taxon>Anaplasmataceae</taxon>
        <taxon>Ehrlichia</taxon>
    </lineage>
</organism>
<reference key="1">
    <citation type="journal article" date="2006" name="PLoS Genet.">
        <title>Comparative genomics of emerging human ehrlichiosis agents.</title>
        <authorList>
            <person name="Dunning Hotopp J.C."/>
            <person name="Lin M."/>
            <person name="Madupu R."/>
            <person name="Crabtree J."/>
            <person name="Angiuoli S.V."/>
            <person name="Eisen J.A."/>
            <person name="Seshadri R."/>
            <person name="Ren Q."/>
            <person name="Wu M."/>
            <person name="Utterback T.R."/>
            <person name="Smith S."/>
            <person name="Lewis M."/>
            <person name="Khouri H."/>
            <person name="Zhang C."/>
            <person name="Niu H."/>
            <person name="Lin Q."/>
            <person name="Ohashi N."/>
            <person name="Zhi N."/>
            <person name="Nelson W.C."/>
            <person name="Brinkac L.M."/>
            <person name="Dodson R.J."/>
            <person name="Rosovitz M.J."/>
            <person name="Sundaram J.P."/>
            <person name="Daugherty S.C."/>
            <person name="Davidsen T."/>
            <person name="Durkin A.S."/>
            <person name="Gwinn M.L."/>
            <person name="Haft D.H."/>
            <person name="Selengut J.D."/>
            <person name="Sullivan S.A."/>
            <person name="Zafar N."/>
            <person name="Zhou L."/>
            <person name="Benahmed F."/>
            <person name="Forberger H."/>
            <person name="Halpin R."/>
            <person name="Mulligan S."/>
            <person name="Robinson J."/>
            <person name="White O."/>
            <person name="Rikihisa Y."/>
            <person name="Tettelin H."/>
        </authorList>
    </citation>
    <scope>NUCLEOTIDE SEQUENCE [LARGE SCALE GENOMIC DNA]</scope>
    <source>
        <strain>ATCC CRL-10679 / Arkansas</strain>
    </source>
</reference>
<sequence length="346" mass="39776">MLHSNIYNLQAEATNKILSSSSLEELESIKLYYFGKSGTITACLKSIATISNIEERKSVGSSVNAICAELKSLINSQKEKLHKIQINAQLMQDRVDISLPVRPKQIAKLHPISKTLHEVRHIFSSLGFKLSDGPELEDEFHVFDALNTHKNHPAREENDTFYLKTLVNQKRVVLRTHTSSVQIRVMQANKGNYPIKIIAPGKVYRNDWDATHSPMFHQIEGLYIDKNVNMGHLKYCIHYFLKKFFGENIQIRFRNSYFPFTEPSAEVDIKCGEKDWIEILGCGMVHRNVLTNVNIDPDQYSGFAFGIGIERVAMLKYNISDLRKFYSNKLQWLNHYGFCFTHLVSC</sequence>